<dbReference type="EC" id="6.3.4.4" evidence="1"/>
<dbReference type="EMBL" id="AE014184">
    <property type="protein sequence ID" value="AAO44889.1"/>
    <property type="molecule type" value="Genomic_DNA"/>
</dbReference>
<dbReference type="RefSeq" id="WP_011096738.1">
    <property type="nucleotide sequence ID" value="NC_004572.3"/>
</dbReference>
<dbReference type="SMR" id="Q83FF0"/>
<dbReference type="STRING" id="203267.TWT_792"/>
<dbReference type="KEGG" id="twh:TWT_792"/>
<dbReference type="eggNOG" id="COG0104">
    <property type="taxonomic scope" value="Bacteria"/>
</dbReference>
<dbReference type="HOGENOM" id="CLU_029848_0_0_11"/>
<dbReference type="OrthoDB" id="9807553at2"/>
<dbReference type="UniPathway" id="UPA00075">
    <property type="reaction ID" value="UER00335"/>
</dbReference>
<dbReference type="Proteomes" id="UP000002200">
    <property type="component" value="Chromosome"/>
</dbReference>
<dbReference type="GO" id="GO:0005737">
    <property type="term" value="C:cytoplasm"/>
    <property type="evidence" value="ECO:0007669"/>
    <property type="project" value="UniProtKB-SubCell"/>
</dbReference>
<dbReference type="GO" id="GO:0004019">
    <property type="term" value="F:adenylosuccinate synthase activity"/>
    <property type="evidence" value="ECO:0007669"/>
    <property type="project" value="UniProtKB-UniRule"/>
</dbReference>
<dbReference type="GO" id="GO:0005525">
    <property type="term" value="F:GTP binding"/>
    <property type="evidence" value="ECO:0007669"/>
    <property type="project" value="UniProtKB-UniRule"/>
</dbReference>
<dbReference type="GO" id="GO:0000287">
    <property type="term" value="F:magnesium ion binding"/>
    <property type="evidence" value="ECO:0007669"/>
    <property type="project" value="UniProtKB-UniRule"/>
</dbReference>
<dbReference type="GO" id="GO:0044208">
    <property type="term" value="P:'de novo' AMP biosynthetic process"/>
    <property type="evidence" value="ECO:0007669"/>
    <property type="project" value="UniProtKB-UniRule"/>
</dbReference>
<dbReference type="GO" id="GO:0046040">
    <property type="term" value="P:IMP metabolic process"/>
    <property type="evidence" value="ECO:0007669"/>
    <property type="project" value="TreeGrafter"/>
</dbReference>
<dbReference type="CDD" id="cd03108">
    <property type="entry name" value="AdSS"/>
    <property type="match status" value="1"/>
</dbReference>
<dbReference type="FunFam" id="1.10.300.10:FF:000001">
    <property type="entry name" value="Adenylosuccinate synthetase"/>
    <property type="match status" value="1"/>
</dbReference>
<dbReference type="FunFam" id="3.90.170.10:FF:000001">
    <property type="entry name" value="Adenylosuccinate synthetase"/>
    <property type="match status" value="1"/>
</dbReference>
<dbReference type="Gene3D" id="3.40.440.10">
    <property type="entry name" value="Adenylosuccinate Synthetase, subunit A, domain 1"/>
    <property type="match status" value="1"/>
</dbReference>
<dbReference type="Gene3D" id="1.10.300.10">
    <property type="entry name" value="Adenylosuccinate Synthetase, subunit A, domain 2"/>
    <property type="match status" value="1"/>
</dbReference>
<dbReference type="Gene3D" id="3.90.170.10">
    <property type="entry name" value="Adenylosuccinate Synthetase, subunit A, domain 3"/>
    <property type="match status" value="1"/>
</dbReference>
<dbReference type="HAMAP" id="MF_00011">
    <property type="entry name" value="Adenylosucc_synth"/>
    <property type="match status" value="1"/>
</dbReference>
<dbReference type="InterPro" id="IPR018220">
    <property type="entry name" value="Adenylosuccin_syn_GTP-bd"/>
</dbReference>
<dbReference type="InterPro" id="IPR033128">
    <property type="entry name" value="Adenylosuccin_syn_Lys_AS"/>
</dbReference>
<dbReference type="InterPro" id="IPR042109">
    <property type="entry name" value="Adenylosuccinate_synth_dom1"/>
</dbReference>
<dbReference type="InterPro" id="IPR042110">
    <property type="entry name" value="Adenylosuccinate_synth_dom2"/>
</dbReference>
<dbReference type="InterPro" id="IPR042111">
    <property type="entry name" value="Adenylosuccinate_synth_dom3"/>
</dbReference>
<dbReference type="InterPro" id="IPR001114">
    <property type="entry name" value="Adenylosuccinate_synthetase"/>
</dbReference>
<dbReference type="InterPro" id="IPR027417">
    <property type="entry name" value="P-loop_NTPase"/>
</dbReference>
<dbReference type="NCBIfam" id="NF002223">
    <property type="entry name" value="PRK01117.1"/>
    <property type="match status" value="1"/>
</dbReference>
<dbReference type="NCBIfam" id="TIGR00184">
    <property type="entry name" value="purA"/>
    <property type="match status" value="1"/>
</dbReference>
<dbReference type="PANTHER" id="PTHR11846">
    <property type="entry name" value="ADENYLOSUCCINATE SYNTHETASE"/>
    <property type="match status" value="1"/>
</dbReference>
<dbReference type="PANTHER" id="PTHR11846:SF0">
    <property type="entry name" value="ADENYLOSUCCINATE SYNTHETASE"/>
    <property type="match status" value="1"/>
</dbReference>
<dbReference type="Pfam" id="PF00709">
    <property type="entry name" value="Adenylsucc_synt"/>
    <property type="match status" value="1"/>
</dbReference>
<dbReference type="SMART" id="SM00788">
    <property type="entry name" value="Adenylsucc_synt"/>
    <property type="match status" value="1"/>
</dbReference>
<dbReference type="SUPFAM" id="SSF52540">
    <property type="entry name" value="P-loop containing nucleoside triphosphate hydrolases"/>
    <property type="match status" value="1"/>
</dbReference>
<dbReference type="PROSITE" id="PS01266">
    <property type="entry name" value="ADENYLOSUCCIN_SYN_1"/>
    <property type="match status" value="1"/>
</dbReference>
<dbReference type="PROSITE" id="PS00513">
    <property type="entry name" value="ADENYLOSUCCIN_SYN_2"/>
    <property type="match status" value="1"/>
</dbReference>
<keyword id="KW-0963">Cytoplasm</keyword>
<keyword id="KW-0342">GTP-binding</keyword>
<keyword id="KW-0436">Ligase</keyword>
<keyword id="KW-0460">Magnesium</keyword>
<keyword id="KW-0479">Metal-binding</keyword>
<keyword id="KW-0547">Nucleotide-binding</keyword>
<keyword id="KW-0658">Purine biosynthesis</keyword>
<keyword id="KW-1185">Reference proteome</keyword>
<gene>
    <name evidence="1" type="primary">purA</name>
    <name type="ordered locus">TWT_792</name>
</gene>
<reference key="1">
    <citation type="journal article" date="2003" name="Genome Res.">
        <title>Tropheryma whipplei twist: a human pathogenic Actinobacteria with a reduced genome.</title>
        <authorList>
            <person name="Raoult D."/>
            <person name="Ogata H."/>
            <person name="Audic S."/>
            <person name="Robert C."/>
            <person name="Suhre K."/>
            <person name="Drancourt M."/>
            <person name="Claverie J.-M."/>
        </authorList>
    </citation>
    <scope>NUCLEOTIDE SEQUENCE [LARGE SCALE GENOMIC DNA]</scope>
    <source>
        <strain>Twist</strain>
    </source>
</reference>
<protein>
    <recommendedName>
        <fullName evidence="1">Adenylosuccinate synthetase</fullName>
        <shortName evidence="1">AMPSase</shortName>
        <shortName evidence="1">AdSS</shortName>
        <ecNumber evidence="1">6.3.4.4</ecNumber>
    </recommendedName>
    <alternativeName>
        <fullName evidence="1">IMP--aspartate ligase</fullName>
    </alternativeName>
</protein>
<evidence type="ECO:0000255" key="1">
    <source>
        <dbReference type="HAMAP-Rule" id="MF_00011"/>
    </source>
</evidence>
<name>PURA_TROWT</name>
<comment type="function">
    <text evidence="1">Plays an important role in the de novo pathway of purine nucleotide biosynthesis. Catalyzes the first committed step in the biosynthesis of AMP from IMP.</text>
</comment>
<comment type="catalytic activity">
    <reaction evidence="1">
        <text>IMP + L-aspartate + GTP = N(6)-(1,2-dicarboxyethyl)-AMP + GDP + phosphate + 2 H(+)</text>
        <dbReference type="Rhea" id="RHEA:15753"/>
        <dbReference type="ChEBI" id="CHEBI:15378"/>
        <dbReference type="ChEBI" id="CHEBI:29991"/>
        <dbReference type="ChEBI" id="CHEBI:37565"/>
        <dbReference type="ChEBI" id="CHEBI:43474"/>
        <dbReference type="ChEBI" id="CHEBI:57567"/>
        <dbReference type="ChEBI" id="CHEBI:58053"/>
        <dbReference type="ChEBI" id="CHEBI:58189"/>
        <dbReference type="EC" id="6.3.4.4"/>
    </reaction>
</comment>
<comment type="cofactor">
    <cofactor evidence="1">
        <name>Mg(2+)</name>
        <dbReference type="ChEBI" id="CHEBI:18420"/>
    </cofactor>
    <text evidence="1">Binds 1 Mg(2+) ion per subunit.</text>
</comment>
<comment type="pathway">
    <text evidence="1">Purine metabolism; AMP biosynthesis via de novo pathway; AMP from IMP: step 1/2.</text>
</comment>
<comment type="subunit">
    <text evidence="1">Homodimer.</text>
</comment>
<comment type="subcellular location">
    <subcellularLocation>
        <location evidence="1">Cytoplasm</location>
    </subcellularLocation>
</comment>
<comment type="similarity">
    <text evidence="1">Belongs to the adenylosuccinate synthetase family.</text>
</comment>
<accession>Q83FF0</accession>
<feature type="chain" id="PRO_0000095252" description="Adenylosuccinate synthetase">
    <location>
        <begin position="1"/>
        <end position="429"/>
    </location>
</feature>
<feature type="active site" description="Proton acceptor" evidence="1">
    <location>
        <position position="13"/>
    </location>
</feature>
<feature type="active site" description="Proton donor" evidence="1">
    <location>
        <position position="41"/>
    </location>
</feature>
<feature type="binding site" evidence="1">
    <location>
        <begin position="12"/>
        <end position="18"/>
    </location>
    <ligand>
        <name>GTP</name>
        <dbReference type="ChEBI" id="CHEBI:37565"/>
    </ligand>
</feature>
<feature type="binding site" description="in other chain" evidence="1">
    <location>
        <begin position="13"/>
        <end position="16"/>
    </location>
    <ligand>
        <name>IMP</name>
        <dbReference type="ChEBI" id="CHEBI:58053"/>
        <note>ligand shared between dimeric partners</note>
    </ligand>
</feature>
<feature type="binding site" evidence="1">
    <location>
        <position position="13"/>
    </location>
    <ligand>
        <name>Mg(2+)</name>
        <dbReference type="ChEBI" id="CHEBI:18420"/>
    </ligand>
</feature>
<feature type="binding site" description="in other chain" evidence="1">
    <location>
        <begin position="38"/>
        <end position="41"/>
    </location>
    <ligand>
        <name>IMP</name>
        <dbReference type="ChEBI" id="CHEBI:58053"/>
        <note>ligand shared between dimeric partners</note>
    </ligand>
</feature>
<feature type="binding site" evidence="1">
    <location>
        <begin position="40"/>
        <end position="42"/>
    </location>
    <ligand>
        <name>GTP</name>
        <dbReference type="ChEBI" id="CHEBI:37565"/>
    </ligand>
</feature>
<feature type="binding site" evidence="1">
    <location>
        <position position="40"/>
    </location>
    <ligand>
        <name>Mg(2+)</name>
        <dbReference type="ChEBI" id="CHEBI:18420"/>
    </ligand>
</feature>
<feature type="binding site" description="in other chain" evidence="1">
    <location>
        <position position="128"/>
    </location>
    <ligand>
        <name>IMP</name>
        <dbReference type="ChEBI" id="CHEBI:58053"/>
        <note>ligand shared between dimeric partners</note>
    </ligand>
</feature>
<feature type="binding site" evidence="1">
    <location>
        <position position="142"/>
    </location>
    <ligand>
        <name>IMP</name>
        <dbReference type="ChEBI" id="CHEBI:58053"/>
        <note>ligand shared between dimeric partners</note>
    </ligand>
</feature>
<feature type="binding site" description="in other chain" evidence="1">
    <location>
        <position position="223"/>
    </location>
    <ligand>
        <name>IMP</name>
        <dbReference type="ChEBI" id="CHEBI:58053"/>
        <note>ligand shared between dimeric partners</note>
    </ligand>
</feature>
<feature type="binding site" description="in other chain" evidence="1">
    <location>
        <position position="238"/>
    </location>
    <ligand>
        <name>IMP</name>
        <dbReference type="ChEBI" id="CHEBI:58053"/>
        <note>ligand shared between dimeric partners</note>
    </ligand>
</feature>
<feature type="binding site" evidence="1">
    <location>
        <begin position="298"/>
        <end position="304"/>
    </location>
    <ligand>
        <name>substrate</name>
    </ligand>
</feature>
<feature type="binding site" description="in other chain" evidence="1">
    <location>
        <position position="302"/>
    </location>
    <ligand>
        <name>IMP</name>
        <dbReference type="ChEBI" id="CHEBI:58053"/>
        <note>ligand shared between dimeric partners</note>
    </ligand>
</feature>
<feature type="binding site" evidence="1">
    <location>
        <position position="304"/>
    </location>
    <ligand>
        <name>GTP</name>
        <dbReference type="ChEBI" id="CHEBI:37565"/>
    </ligand>
</feature>
<feature type="binding site" evidence="1">
    <location>
        <begin position="330"/>
        <end position="332"/>
    </location>
    <ligand>
        <name>GTP</name>
        <dbReference type="ChEBI" id="CHEBI:37565"/>
    </ligand>
</feature>
<feature type="binding site" evidence="1">
    <location>
        <begin position="412"/>
        <end position="414"/>
    </location>
    <ligand>
        <name>GTP</name>
        <dbReference type="ChEBI" id="CHEBI:37565"/>
    </ligand>
</feature>
<proteinExistence type="inferred from homology"/>
<sequence>MPATILIGAQWGDEGKGKATDLLAKDIDYVVKFNGGNNAGHTVVIGGDKYVLHLLPSGILNENVVPVIANGVVINPEVLFDEIATLNSRGVNTDKLVISANAHIIAPFHRTIDLVTERFLGKRQLGTTGRGIGPTYADKINRIGIRVQDLFDKSVLRQKIEGSLSNKNHMLVKVFNRRSVSVTEMLDYLLSFAERMRPMIADTSLLLNNALDCGKHVLFEGGQATMLDVDHGSYPFVTSSNATVGGAITGAGIGPTRVNKVIGVAKSYTTRVGAGPFPTELHDEYGEWLQKRGYEVGATTGRKRRCGWFDGVVARYATRINGITDYVLTKLDVLTGLDRIPICVGYKVGDSVFREMPVSQSDFHHAVPIYEDLPGWQCNISECESFDSLPPEARGYVLALEDLIKARISVIGTGPERENIIIRHPLGIF</sequence>
<organism>
    <name type="scientific">Tropheryma whipplei (strain Twist)</name>
    <name type="common">Whipple's bacillus</name>
    <dbReference type="NCBI Taxonomy" id="203267"/>
    <lineage>
        <taxon>Bacteria</taxon>
        <taxon>Bacillati</taxon>
        <taxon>Actinomycetota</taxon>
        <taxon>Actinomycetes</taxon>
        <taxon>Micrococcales</taxon>
        <taxon>Tropherymataceae</taxon>
        <taxon>Tropheryma</taxon>
    </lineage>
</organism>